<reference key="1">
    <citation type="journal article" date="2005" name="Nucleic Acids Res.">
        <title>Genome dynamics and diversity of Shigella species, the etiologic agents of bacillary dysentery.</title>
        <authorList>
            <person name="Yang F."/>
            <person name="Yang J."/>
            <person name="Zhang X."/>
            <person name="Chen L."/>
            <person name="Jiang Y."/>
            <person name="Yan Y."/>
            <person name="Tang X."/>
            <person name="Wang J."/>
            <person name="Xiong Z."/>
            <person name="Dong J."/>
            <person name="Xue Y."/>
            <person name="Zhu Y."/>
            <person name="Xu X."/>
            <person name="Sun L."/>
            <person name="Chen S."/>
            <person name="Nie H."/>
            <person name="Peng J."/>
            <person name="Xu J."/>
            <person name="Wang Y."/>
            <person name="Yuan Z."/>
            <person name="Wen Y."/>
            <person name="Yao Z."/>
            <person name="Shen Y."/>
            <person name="Qiang B."/>
            <person name="Hou Y."/>
            <person name="Yu J."/>
            <person name="Jin Q."/>
        </authorList>
    </citation>
    <scope>NUCLEOTIDE SEQUENCE [LARGE SCALE GENOMIC DNA]</scope>
    <source>
        <strain>Ss046</strain>
    </source>
</reference>
<proteinExistence type="inferred from homology"/>
<accession>Q3Z1Z2</accession>
<comment type="function">
    <text evidence="1">Pyridoxal kinase involved in the salvage pathway of pyridoxal 5'-phosphate (PLP). Catalyzes the phosphorylation of pyridoxal to PLP.</text>
</comment>
<comment type="catalytic activity">
    <reaction evidence="1">
        <text>pyridoxal + ATP = pyridoxal 5'-phosphate + ADP + H(+)</text>
        <dbReference type="Rhea" id="RHEA:10224"/>
        <dbReference type="ChEBI" id="CHEBI:15378"/>
        <dbReference type="ChEBI" id="CHEBI:17310"/>
        <dbReference type="ChEBI" id="CHEBI:30616"/>
        <dbReference type="ChEBI" id="CHEBI:456216"/>
        <dbReference type="ChEBI" id="CHEBI:597326"/>
        <dbReference type="EC" id="2.7.1.35"/>
    </reaction>
</comment>
<comment type="cofactor">
    <cofactor evidence="1">
        <name>Mg(2+)</name>
        <dbReference type="ChEBI" id="CHEBI:18420"/>
    </cofactor>
</comment>
<comment type="pathway">
    <text evidence="1">Cofactor metabolism; pyridoxal 5'-phosphate salvage; pyridoxal 5'-phosphate from pyridoxal: step 1/1.</text>
</comment>
<comment type="subunit">
    <text evidence="1">Homodimer.</text>
</comment>
<comment type="similarity">
    <text evidence="1">Belongs to the pyridoxine kinase family. PdxY subfamily.</text>
</comment>
<gene>
    <name evidence="1" type="primary">pdxY</name>
    <name type="ordered locus">SSON_1520</name>
</gene>
<organism>
    <name type="scientific">Shigella sonnei (strain Ss046)</name>
    <dbReference type="NCBI Taxonomy" id="300269"/>
    <lineage>
        <taxon>Bacteria</taxon>
        <taxon>Pseudomonadati</taxon>
        <taxon>Pseudomonadota</taxon>
        <taxon>Gammaproteobacteria</taxon>
        <taxon>Enterobacterales</taxon>
        <taxon>Enterobacteriaceae</taxon>
        <taxon>Shigella</taxon>
    </lineage>
</organism>
<keyword id="KW-0067">ATP-binding</keyword>
<keyword id="KW-0418">Kinase</keyword>
<keyword id="KW-0460">Magnesium</keyword>
<keyword id="KW-0547">Nucleotide-binding</keyword>
<keyword id="KW-1185">Reference proteome</keyword>
<keyword id="KW-0808">Transferase</keyword>
<protein>
    <recommendedName>
        <fullName evidence="1">Pyridoxal kinase PdxY</fullName>
        <shortName evidence="1">PL kinase</shortName>
        <ecNumber evidence="1">2.7.1.35</ecNumber>
    </recommendedName>
</protein>
<sequence>MMKNILAIQSHVVYGHAGNSAAEFPMRRLGANVWPLNTVQFSNHTQYGKWTGCVMPPSHLTEIVQGIAAIDKLHTCDAVLSGYLGSAEQGEHILGIVRQVKAANPQAKYFCDPVMGHPEKGCIVAPGVAEFHVRHGLPASDIIAPNLVELEILCEHAVNNVEEAVLAARELIAQGPQIVLVKHLARAGYSRDRFEMLLVTADEAWHISRPLVDFGMRQPVGVGDVTSGLLLVKLLQGATLQEVLEHVTAAVYEIMVTTKAMQEYELQVVAAQDRIAKPEHYFSATKL</sequence>
<evidence type="ECO:0000255" key="1">
    <source>
        <dbReference type="HAMAP-Rule" id="MF_01639"/>
    </source>
</evidence>
<feature type="chain" id="PRO_0000269833" description="Pyridoxal kinase PdxY">
    <location>
        <begin position="1"/>
        <end position="287"/>
    </location>
</feature>
<feature type="binding site" evidence="1">
    <location>
        <position position="10"/>
    </location>
    <ligand>
        <name>substrate</name>
    </ligand>
</feature>
<feature type="binding site" evidence="1">
    <location>
        <begin position="45"/>
        <end position="46"/>
    </location>
    <ligand>
        <name>substrate</name>
    </ligand>
</feature>
<feature type="binding site" evidence="1">
    <location>
        <position position="112"/>
    </location>
    <ligand>
        <name>ATP</name>
        <dbReference type="ChEBI" id="CHEBI:30616"/>
    </ligand>
</feature>
<feature type="binding site" evidence="1">
    <location>
        <position position="144"/>
    </location>
    <ligand>
        <name>ATP</name>
        <dbReference type="ChEBI" id="CHEBI:30616"/>
    </ligand>
</feature>
<feature type="binding site" evidence="1">
    <location>
        <position position="149"/>
    </location>
    <ligand>
        <name>ATP</name>
        <dbReference type="ChEBI" id="CHEBI:30616"/>
    </ligand>
</feature>
<feature type="binding site" evidence="1">
    <location>
        <position position="182"/>
    </location>
    <ligand>
        <name>ATP</name>
        <dbReference type="ChEBI" id="CHEBI:30616"/>
    </ligand>
</feature>
<feature type="binding site" evidence="1">
    <location>
        <begin position="209"/>
        <end position="212"/>
    </location>
    <ligand>
        <name>ATP</name>
        <dbReference type="ChEBI" id="CHEBI:30616"/>
    </ligand>
</feature>
<feature type="binding site" evidence="1">
    <location>
        <position position="224"/>
    </location>
    <ligand>
        <name>substrate</name>
    </ligand>
</feature>
<name>PDXY_SHISS</name>
<dbReference type="EC" id="2.7.1.35" evidence="1"/>
<dbReference type="EMBL" id="CP000038">
    <property type="protein sequence ID" value="AAZ88220.1"/>
    <property type="molecule type" value="Genomic_DNA"/>
</dbReference>
<dbReference type="RefSeq" id="WP_011310203.1">
    <property type="nucleotide sequence ID" value="NC_007384.1"/>
</dbReference>
<dbReference type="SMR" id="Q3Z1Z2"/>
<dbReference type="GeneID" id="93775790"/>
<dbReference type="KEGG" id="ssn:SSON_1520"/>
<dbReference type="HOGENOM" id="CLU_046496_3_0_6"/>
<dbReference type="UniPathway" id="UPA01068">
    <property type="reaction ID" value="UER00298"/>
</dbReference>
<dbReference type="Proteomes" id="UP000002529">
    <property type="component" value="Chromosome"/>
</dbReference>
<dbReference type="GO" id="GO:0005829">
    <property type="term" value="C:cytosol"/>
    <property type="evidence" value="ECO:0007669"/>
    <property type="project" value="TreeGrafter"/>
</dbReference>
<dbReference type="GO" id="GO:0005524">
    <property type="term" value="F:ATP binding"/>
    <property type="evidence" value="ECO:0007669"/>
    <property type="project" value="UniProtKB-UniRule"/>
</dbReference>
<dbReference type="GO" id="GO:0000287">
    <property type="term" value="F:magnesium ion binding"/>
    <property type="evidence" value="ECO:0007669"/>
    <property type="project" value="UniProtKB-UniRule"/>
</dbReference>
<dbReference type="GO" id="GO:0008478">
    <property type="term" value="F:pyridoxal kinase activity"/>
    <property type="evidence" value="ECO:0007669"/>
    <property type="project" value="UniProtKB-UniRule"/>
</dbReference>
<dbReference type="GO" id="GO:0009443">
    <property type="term" value="P:pyridoxal 5'-phosphate salvage"/>
    <property type="evidence" value="ECO:0007669"/>
    <property type="project" value="UniProtKB-UniRule"/>
</dbReference>
<dbReference type="CDD" id="cd01173">
    <property type="entry name" value="pyridoxal_pyridoxamine_kinase"/>
    <property type="match status" value="1"/>
</dbReference>
<dbReference type="FunFam" id="3.40.1190.20:FF:000008">
    <property type="entry name" value="Pyridoxal kinase PdxY"/>
    <property type="match status" value="1"/>
</dbReference>
<dbReference type="Gene3D" id="3.40.1190.20">
    <property type="match status" value="1"/>
</dbReference>
<dbReference type="HAMAP" id="MF_01639">
    <property type="entry name" value="PdxY"/>
    <property type="match status" value="1"/>
</dbReference>
<dbReference type="InterPro" id="IPR013749">
    <property type="entry name" value="PM/HMP-P_kinase-1"/>
</dbReference>
<dbReference type="InterPro" id="IPR004625">
    <property type="entry name" value="PyrdxlKinase"/>
</dbReference>
<dbReference type="InterPro" id="IPR023685">
    <property type="entry name" value="Pyridoxal_kinase_PdxY"/>
</dbReference>
<dbReference type="InterPro" id="IPR029056">
    <property type="entry name" value="Ribokinase-like"/>
</dbReference>
<dbReference type="NCBIfam" id="NF004398">
    <property type="entry name" value="PRK05756.1"/>
    <property type="match status" value="1"/>
</dbReference>
<dbReference type="NCBIfam" id="TIGR00687">
    <property type="entry name" value="pyridox_kin"/>
    <property type="match status" value="1"/>
</dbReference>
<dbReference type="PANTHER" id="PTHR10534">
    <property type="entry name" value="PYRIDOXAL KINASE"/>
    <property type="match status" value="1"/>
</dbReference>
<dbReference type="PANTHER" id="PTHR10534:SF2">
    <property type="entry name" value="PYRIDOXAL KINASE"/>
    <property type="match status" value="1"/>
</dbReference>
<dbReference type="Pfam" id="PF08543">
    <property type="entry name" value="Phos_pyr_kin"/>
    <property type="match status" value="1"/>
</dbReference>
<dbReference type="SUPFAM" id="SSF53613">
    <property type="entry name" value="Ribokinase-like"/>
    <property type="match status" value="1"/>
</dbReference>